<proteinExistence type="inferred from homology"/>
<sequence length="146" mass="15352">MSDIQLNTLKPAEGSKHAKRRVGRGIGSGLGKTAGRGHKGQKSRSGGFHKVGFEGGQMPLQRRLPKRGFTPLGQHLYAEVRPSELQLMEAEEIDVQALKAAGVVGQSVRYAKVIKSGELSRKVVLRGITATAGARAAIEAAGGSLA</sequence>
<organism>
    <name type="scientific">Bordetella parapertussis (strain 12822 / ATCC BAA-587 / NCTC 13253)</name>
    <dbReference type="NCBI Taxonomy" id="257311"/>
    <lineage>
        <taxon>Bacteria</taxon>
        <taxon>Pseudomonadati</taxon>
        <taxon>Pseudomonadota</taxon>
        <taxon>Betaproteobacteria</taxon>
        <taxon>Burkholderiales</taxon>
        <taxon>Alcaligenaceae</taxon>
        <taxon>Bordetella</taxon>
    </lineage>
</organism>
<evidence type="ECO:0000255" key="1">
    <source>
        <dbReference type="HAMAP-Rule" id="MF_01341"/>
    </source>
</evidence>
<evidence type="ECO:0000256" key="2">
    <source>
        <dbReference type="SAM" id="MobiDB-lite"/>
    </source>
</evidence>
<evidence type="ECO:0000305" key="3"/>
<dbReference type="EMBL" id="BX640423">
    <property type="protein sequence ID" value="CAE39791.1"/>
    <property type="molecule type" value="Genomic_DNA"/>
</dbReference>
<dbReference type="RefSeq" id="WP_010927270.1">
    <property type="nucleotide sequence ID" value="NC_002928.3"/>
</dbReference>
<dbReference type="SMR" id="Q7W2D6"/>
<dbReference type="GeneID" id="93206280"/>
<dbReference type="KEGG" id="bpa:BPP0050"/>
<dbReference type="HOGENOM" id="CLU_055188_4_2_4"/>
<dbReference type="Proteomes" id="UP000001421">
    <property type="component" value="Chromosome"/>
</dbReference>
<dbReference type="GO" id="GO:0022625">
    <property type="term" value="C:cytosolic large ribosomal subunit"/>
    <property type="evidence" value="ECO:0007669"/>
    <property type="project" value="TreeGrafter"/>
</dbReference>
<dbReference type="GO" id="GO:0019843">
    <property type="term" value="F:rRNA binding"/>
    <property type="evidence" value="ECO:0007669"/>
    <property type="project" value="UniProtKB-UniRule"/>
</dbReference>
<dbReference type="GO" id="GO:0003735">
    <property type="term" value="F:structural constituent of ribosome"/>
    <property type="evidence" value="ECO:0007669"/>
    <property type="project" value="InterPro"/>
</dbReference>
<dbReference type="GO" id="GO:0006412">
    <property type="term" value="P:translation"/>
    <property type="evidence" value="ECO:0007669"/>
    <property type="project" value="UniProtKB-UniRule"/>
</dbReference>
<dbReference type="Gene3D" id="3.100.10.10">
    <property type="match status" value="1"/>
</dbReference>
<dbReference type="HAMAP" id="MF_01341">
    <property type="entry name" value="Ribosomal_uL15"/>
    <property type="match status" value="1"/>
</dbReference>
<dbReference type="InterPro" id="IPR030878">
    <property type="entry name" value="Ribosomal_uL15"/>
</dbReference>
<dbReference type="InterPro" id="IPR021131">
    <property type="entry name" value="Ribosomal_uL15/eL18"/>
</dbReference>
<dbReference type="InterPro" id="IPR036227">
    <property type="entry name" value="Ribosomal_uL15/eL18_sf"/>
</dbReference>
<dbReference type="InterPro" id="IPR005749">
    <property type="entry name" value="Ribosomal_uL15_bac-type"/>
</dbReference>
<dbReference type="NCBIfam" id="TIGR01071">
    <property type="entry name" value="rplO_bact"/>
    <property type="match status" value="1"/>
</dbReference>
<dbReference type="PANTHER" id="PTHR12934">
    <property type="entry name" value="50S RIBOSOMAL PROTEIN L15"/>
    <property type="match status" value="1"/>
</dbReference>
<dbReference type="PANTHER" id="PTHR12934:SF11">
    <property type="entry name" value="LARGE RIBOSOMAL SUBUNIT PROTEIN UL15M"/>
    <property type="match status" value="1"/>
</dbReference>
<dbReference type="Pfam" id="PF00828">
    <property type="entry name" value="Ribosomal_L27A"/>
    <property type="match status" value="1"/>
</dbReference>
<dbReference type="SUPFAM" id="SSF52080">
    <property type="entry name" value="Ribosomal proteins L15p and L18e"/>
    <property type="match status" value="1"/>
</dbReference>
<keyword id="KW-0687">Ribonucleoprotein</keyword>
<keyword id="KW-0689">Ribosomal protein</keyword>
<keyword id="KW-0694">RNA-binding</keyword>
<keyword id="KW-0699">rRNA-binding</keyword>
<reference key="1">
    <citation type="journal article" date="2003" name="Nat. Genet.">
        <title>Comparative analysis of the genome sequences of Bordetella pertussis, Bordetella parapertussis and Bordetella bronchiseptica.</title>
        <authorList>
            <person name="Parkhill J."/>
            <person name="Sebaihia M."/>
            <person name="Preston A."/>
            <person name="Murphy L.D."/>
            <person name="Thomson N.R."/>
            <person name="Harris D.E."/>
            <person name="Holden M.T.G."/>
            <person name="Churcher C.M."/>
            <person name="Bentley S.D."/>
            <person name="Mungall K.L."/>
            <person name="Cerdeno-Tarraga A.-M."/>
            <person name="Temple L."/>
            <person name="James K.D."/>
            <person name="Harris B."/>
            <person name="Quail M.A."/>
            <person name="Achtman M."/>
            <person name="Atkin R."/>
            <person name="Baker S."/>
            <person name="Basham D."/>
            <person name="Bason N."/>
            <person name="Cherevach I."/>
            <person name="Chillingworth T."/>
            <person name="Collins M."/>
            <person name="Cronin A."/>
            <person name="Davis P."/>
            <person name="Doggett J."/>
            <person name="Feltwell T."/>
            <person name="Goble A."/>
            <person name="Hamlin N."/>
            <person name="Hauser H."/>
            <person name="Holroyd S."/>
            <person name="Jagels K."/>
            <person name="Leather S."/>
            <person name="Moule S."/>
            <person name="Norberczak H."/>
            <person name="O'Neil S."/>
            <person name="Ormond D."/>
            <person name="Price C."/>
            <person name="Rabbinowitsch E."/>
            <person name="Rutter S."/>
            <person name="Sanders M."/>
            <person name="Saunders D."/>
            <person name="Seeger K."/>
            <person name="Sharp S."/>
            <person name="Simmonds M."/>
            <person name="Skelton J."/>
            <person name="Squares R."/>
            <person name="Squares S."/>
            <person name="Stevens K."/>
            <person name="Unwin L."/>
            <person name="Whitehead S."/>
            <person name="Barrell B.G."/>
            <person name="Maskell D.J."/>
        </authorList>
    </citation>
    <scope>NUCLEOTIDE SEQUENCE [LARGE SCALE GENOMIC DNA]</scope>
    <source>
        <strain>12822 / ATCC BAA-587 / NCTC 13253</strain>
    </source>
</reference>
<accession>Q7W2D6</accession>
<feature type="chain" id="PRO_0000104685" description="Large ribosomal subunit protein uL15">
    <location>
        <begin position="1"/>
        <end position="146"/>
    </location>
</feature>
<feature type="region of interest" description="Disordered" evidence="2">
    <location>
        <begin position="1"/>
        <end position="65"/>
    </location>
</feature>
<feature type="compositionally biased region" description="Gly residues" evidence="2">
    <location>
        <begin position="24"/>
        <end position="34"/>
    </location>
</feature>
<comment type="function">
    <text evidence="1">Binds to the 23S rRNA.</text>
</comment>
<comment type="subunit">
    <text evidence="1">Part of the 50S ribosomal subunit.</text>
</comment>
<comment type="similarity">
    <text evidence="1">Belongs to the universal ribosomal protein uL15 family.</text>
</comment>
<gene>
    <name evidence="1" type="primary">rplO</name>
    <name type="ordered locus">BPP0050</name>
</gene>
<protein>
    <recommendedName>
        <fullName evidence="1">Large ribosomal subunit protein uL15</fullName>
    </recommendedName>
    <alternativeName>
        <fullName evidence="3">50S ribosomal protein L15</fullName>
    </alternativeName>
</protein>
<name>RL15_BORPA</name>